<keyword id="KW-0903">Direct protein sequencing</keyword>
<keyword id="KW-0378">Hydrolase</keyword>
<keyword id="KW-0479">Metal-binding</keyword>
<keyword id="KW-0862">Zinc</keyword>
<dbReference type="EC" id="3.5.2.2" evidence="1"/>
<dbReference type="EMBL" id="U84197">
    <property type="protein sequence ID" value="AAC00209.1"/>
    <property type="molecule type" value="Genomic_DNA"/>
</dbReference>
<dbReference type="EMBL" id="L24157">
    <property type="protein sequence ID" value="AAA21752.1"/>
    <property type="status" value="ALT_FRAME"/>
    <property type="molecule type" value="Genomic_DNA"/>
</dbReference>
<dbReference type="SMR" id="Q59699"/>
<dbReference type="MEROPS" id="M38.973"/>
<dbReference type="eggNOG" id="COG0044">
    <property type="taxonomic scope" value="Bacteria"/>
</dbReference>
<dbReference type="BRENDA" id="3.5.2.2">
    <property type="organism ID" value="5092"/>
</dbReference>
<dbReference type="GO" id="GO:0005829">
    <property type="term" value="C:cytosol"/>
    <property type="evidence" value="ECO:0007669"/>
    <property type="project" value="TreeGrafter"/>
</dbReference>
<dbReference type="GO" id="GO:0004157">
    <property type="term" value="F:dihydropyrimidinase activity"/>
    <property type="evidence" value="ECO:0007669"/>
    <property type="project" value="UniProtKB-EC"/>
</dbReference>
<dbReference type="GO" id="GO:0046872">
    <property type="term" value="F:metal ion binding"/>
    <property type="evidence" value="ECO:0007669"/>
    <property type="project" value="UniProtKB-KW"/>
</dbReference>
<dbReference type="CDD" id="cd01314">
    <property type="entry name" value="D-HYD"/>
    <property type="match status" value="1"/>
</dbReference>
<dbReference type="FunFam" id="3.20.20.140:FF:000001">
    <property type="entry name" value="Dihydropyrimidinase like 3"/>
    <property type="match status" value="1"/>
</dbReference>
<dbReference type="Gene3D" id="3.20.20.140">
    <property type="entry name" value="Metal-dependent hydrolases"/>
    <property type="match status" value="1"/>
</dbReference>
<dbReference type="Gene3D" id="2.30.40.10">
    <property type="entry name" value="Urease, subunit C, domain 1"/>
    <property type="match status" value="1"/>
</dbReference>
<dbReference type="InterPro" id="IPR006680">
    <property type="entry name" value="Amidohydro-rel"/>
</dbReference>
<dbReference type="InterPro" id="IPR011778">
    <property type="entry name" value="Hydantoinase/dihydroPyrase"/>
</dbReference>
<dbReference type="InterPro" id="IPR011059">
    <property type="entry name" value="Metal-dep_hydrolase_composite"/>
</dbReference>
<dbReference type="InterPro" id="IPR032466">
    <property type="entry name" value="Metal_Hydrolase"/>
</dbReference>
<dbReference type="InterPro" id="IPR050378">
    <property type="entry name" value="Metallo-dep_Hydrolases_sf"/>
</dbReference>
<dbReference type="NCBIfam" id="TIGR02033">
    <property type="entry name" value="D-hydantoinase"/>
    <property type="match status" value="1"/>
</dbReference>
<dbReference type="PANTHER" id="PTHR11647:SF1">
    <property type="entry name" value="COLLAPSIN RESPONSE MEDIATOR PROTEIN"/>
    <property type="match status" value="1"/>
</dbReference>
<dbReference type="PANTHER" id="PTHR11647">
    <property type="entry name" value="HYDRANTOINASE/DIHYDROPYRIMIDINASE FAMILY MEMBER"/>
    <property type="match status" value="1"/>
</dbReference>
<dbReference type="Pfam" id="PF01979">
    <property type="entry name" value="Amidohydro_1"/>
    <property type="match status" value="1"/>
</dbReference>
<dbReference type="SUPFAM" id="SSF51338">
    <property type="entry name" value="Composite domain of metallo-dependent hydrolases"/>
    <property type="match status" value="1"/>
</dbReference>
<dbReference type="SUPFAM" id="SSF51556">
    <property type="entry name" value="Metallo-dependent hydrolases"/>
    <property type="match status" value="1"/>
</dbReference>
<name>HYDA_PSEPU</name>
<sequence length="495" mass="53507">MSLLIRGATVVTHEESYPADVLCVDGLIRAIGPNLEPPTDCEILDGSGQYLMPGGIDPHTHMQLPFMGTVASEDFFSGTAAGLAGGTTSIIDFVIPNPQQSLLEAFHTWRGWAQKSASDYGFHVAITWWSEQVAEEMGELVAKHGVNSFKHFMAYKNAIMAADDTLVASFERCLQLGAVPTVHAENGELVYHLQKKLLAQGMTGPEAHPLSRPSQVEGEAASRAIRIAETIGTPLYVVHISSREALDEITYARAKGQPVYGEVLPGHLLLDDSVYRDPDWATAAGYVMSPPFRPREHQEALWRGLQSGNLHTTATDHCCFCAEQKAMGRDDFSRIPNGTAGIEDRMAVLWDAGVNSGRLSMHEFVALTSTNTAKIFNLFPRKGAIRVGADADLVLWDPQGTRTLSAQTHHQRVDFNIFEGRTVRGVPSHTISQGKVLWADGDLRRRGRGGAVCGTAGVSVGVRGAGATRRTAAPDARSALRPLGLLRSPSPASQI</sequence>
<reference key="1">
    <citation type="journal article" date="1998" name="Biochim. Biophys. Acta">
        <title>Identification of the open reading frame for the Pseudomonas putida D-hydantoinase gene and expression of the gene in Escherichia coli.</title>
        <authorList>
            <person name="Chien H.R."/>
            <person name="Jih Y.L."/>
            <person name="Yang W.Y."/>
            <person name="Hsu W.H."/>
        </authorList>
    </citation>
    <scope>NUCLEOTIDE SEQUENCE [GENOMIC DNA]</scope>
    <scope>PROTEIN SEQUENCE OF 1-18 AND 492-494</scope>
    <scope>FUNCTION</scope>
    <scope>INDUCTION</scope>
    <scope>NOMENCLATURE</scope>
    <source>
        <strain>ATCC 950 / BCRC 12857 / NBRC 13696 / Stanier 91</strain>
    </source>
</reference>
<reference key="2">
    <citation type="journal article" date="1994" name="Appl. Environ. Microbiol.">
        <title>Cloning, sequencing, and expression in Escherichia coli of the D-hydantoinase gene from Pseudomonas putida and distribution of homologous genes in other microorganisms.</title>
        <authorList>
            <person name="Lapointe G."/>
            <person name="Viau S."/>
            <person name="Leblanc D."/>
            <person name="Robert N."/>
            <person name="Morin A."/>
        </authorList>
    </citation>
    <scope>NUCLEOTIDE SEQUENCE [GENOMIC DNA]</scope>
    <scope>FUNCTION</scope>
    <source>
        <strain>DSM 84 / IMG 1513</strain>
    </source>
</reference>
<gene>
    <name evidence="4" type="primary">dht</name>
</gene>
<feature type="chain" id="PRO_0000165935" description="D-hydantoinase/dihydropyrimidinase">
    <location>
        <begin position="1"/>
        <end position="495"/>
    </location>
</feature>
<feature type="binding site" evidence="2">
    <location>
        <position position="59"/>
    </location>
    <ligand>
        <name>Zn(2+)</name>
        <dbReference type="ChEBI" id="CHEBI:29105"/>
        <label>1</label>
    </ligand>
</feature>
<feature type="binding site" evidence="2">
    <location>
        <position position="61"/>
    </location>
    <ligand>
        <name>Zn(2+)</name>
        <dbReference type="ChEBI" id="CHEBI:29105"/>
        <label>1</label>
    </ligand>
</feature>
<feature type="binding site" description="via carbamate group" evidence="2">
    <location>
        <position position="150"/>
    </location>
    <ligand>
        <name>Zn(2+)</name>
        <dbReference type="ChEBI" id="CHEBI:29105"/>
        <label>1</label>
    </ligand>
</feature>
<feature type="binding site" description="via carbamate group" evidence="2">
    <location>
        <position position="150"/>
    </location>
    <ligand>
        <name>Zn(2+)</name>
        <dbReference type="ChEBI" id="CHEBI:29105"/>
        <label>2</label>
    </ligand>
</feature>
<feature type="binding site" evidence="2">
    <location>
        <position position="155"/>
    </location>
    <ligand>
        <name>substrate</name>
    </ligand>
</feature>
<feature type="binding site" evidence="2">
    <location>
        <position position="183"/>
    </location>
    <ligand>
        <name>Zn(2+)</name>
        <dbReference type="ChEBI" id="CHEBI:29105"/>
        <label>2</label>
    </ligand>
</feature>
<feature type="binding site" evidence="2">
    <location>
        <position position="239"/>
    </location>
    <ligand>
        <name>Zn(2+)</name>
        <dbReference type="ChEBI" id="CHEBI:29105"/>
        <label>2</label>
    </ligand>
</feature>
<feature type="binding site" evidence="2">
    <location>
        <position position="289"/>
    </location>
    <ligand>
        <name>substrate</name>
    </ligand>
</feature>
<feature type="binding site" evidence="2">
    <location>
        <position position="316"/>
    </location>
    <ligand>
        <name>Zn(2+)</name>
        <dbReference type="ChEBI" id="CHEBI:29105"/>
        <label>1</label>
    </ligand>
</feature>
<feature type="binding site" evidence="2">
    <location>
        <position position="337"/>
    </location>
    <ligand>
        <name>substrate</name>
    </ligand>
</feature>
<feature type="modified residue" description="N6-carboxylysine" evidence="2">
    <location>
        <position position="150"/>
    </location>
</feature>
<feature type="sequence conflict" description="In Ref. 2; AAA21752." evidence="5" ref="2">
    <original>G</original>
    <variation>R</variation>
    <location>
        <position position="304"/>
    </location>
</feature>
<organism>
    <name type="scientific">Pseudomonas putida</name>
    <name type="common">Arthrobacter siderocapsulatus</name>
    <dbReference type="NCBI Taxonomy" id="303"/>
    <lineage>
        <taxon>Bacteria</taxon>
        <taxon>Pseudomonadati</taxon>
        <taxon>Pseudomonadota</taxon>
        <taxon>Gammaproteobacteria</taxon>
        <taxon>Pseudomonadales</taxon>
        <taxon>Pseudomonadaceae</taxon>
        <taxon>Pseudomonas</taxon>
    </lineage>
</organism>
<accession>Q59699</accession>
<accession>O54406</accession>
<evidence type="ECO:0000250" key="1">
    <source>
        <dbReference type="UniProtKB" id="Q55DL0"/>
    </source>
</evidence>
<evidence type="ECO:0000250" key="2">
    <source>
        <dbReference type="UniProtKB" id="Q9P903"/>
    </source>
</evidence>
<evidence type="ECO:0000269" key="3">
    <source>
    </source>
</evidence>
<evidence type="ECO:0000303" key="4">
    <source>
    </source>
</evidence>
<evidence type="ECO:0000305" key="5"/>
<evidence type="ECO:0000305" key="6">
    <source>
    </source>
</evidence>
<evidence type="ECO:0000305" key="7">
    <source>
    </source>
</evidence>
<protein>
    <recommendedName>
        <fullName evidence="4">D-hydantoinase/dihydropyrimidinase</fullName>
        <shortName evidence="4">DHPase</shortName>
        <ecNumber evidence="1">3.5.2.2</ecNumber>
    </recommendedName>
</protein>
<proteinExistence type="evidence at protein level"/>
<comment type="function">
    <text evidence="6 7">Catalyzes the hydrolysis of dihydropyrimidines and of the structurally related DL-5-mono-substituted hydantoins, to produce N-carbamoyl-D-amino acids.</text>
</comment>
<comment type="catalytic activity">
    <reaction evidence="1">
        <text>5,6-dihydrouracil + H2O = 3-(carbamoylamino)propanoate + H(+)</text>
        <dbReference type="Rhea" id="RHEA:16121"/>
        <dbReference type="ChEBI" id="CHEBI:11892"/>
        <dbReference type="ChEBI" id="CHEBI:15377"/>
        <dbReference type="ChEBI" id="CHEBI:15378"/>
        <dbReference type="ChEBI" id="CHEBI:15901"/>
        <dbReference type="EC" id="3.5.2.2"/>
    </reaction>
</comment>
<comment type="cofactor">
    <cofactor evidence="1">
        <name>Zn(2+)</name>
        <dbReference type="ChEBI" id="CHEBI:29105"/>
    </cofactor>
    <text evidence="1">Binds 2 Zn(2+) ions per subunit.</text>
</comment>
<comment type="subunit">
    <text evidence="1">Homotetramer.</text>
</comment>
<comment type="induction">
    <text evidence="3">By lactose.</text>
</comment>
<comment type="PTM">
    <text evidence="1">Carboxylation allows a single lysine to coordinate two zinc ions.</text>
</comment>
<comment type="similarity">
    <text evidence="5">Belongs to the metallo-dependent hydrolases superfamily. Hydantoinase/dihydropyrimidinase family.</text>
</comment>
<comment type="sequence caution" evidence="5">
    <conflict type="frameshift">
        <sequence resource="EMBL-CDS" id="AAA21752"/>
    </conflict>
</comment>